<gene>
    <name evidence="1" type="primary">tilS</name>
    <name type="ordered locus">SPH_0011</name>
</gene>
<name>TILS_STRPI</name>
<reference key="1">
    <citation type="journal article" date="2010" name="Genome Biol.">
        <title>Structure and dynamics of the pan-genome of Streptococcus pneumoniae and closely related species.</title>
        <authorList>
            <person name="Donati C."/>
            <person name="Hiller N.L."/>
            <person name="Tettelin H."/>
            <person name="Muzzi A."/>
            <person name="Croucher N.J."/>
            <person name="Angiuoli S.V."/>
            <person name="Oggioni M."/>
            <person name="Dunning Hotopp J.C."/>
            <person name="Hu F.Z."/>
            <person name="Riley D.R."/>
            <person name="Covacci A."/>
            <person name="Mitchell T.J."/>
            <person name="Bentley S.D."/>
            <person name="Kilian M."/>
            <person name="Ehrlich G.D."/>
            <person name="Rappuoli R."/>
            <person name="Moxon E.R."/>
            <person name="Masignani V."/>
        </authorList>
    </citation>
    <scope>NUCLEOTIDE SEQUENCE [LARGE SCALE GENOMIC DNA]</scope>
    <source>
        <strain>Hungary19A-6</strain>
    </source>
</reference>
<proteinExistence type="inferred from homology"/>
<sequence length="425" mass="49881">MREPDFLNHFLKKGYFKKHAKAVLALSGGLDSMFLFKVLSTYQKELEIELILAHVNHKQRIESDWEEKELRKLAAEAELPIYISNFSGEFSEARARNFRYDFFQEVMKKTGATALVTAHHADDQVETILMRLIRGTRLRYLSGIKEKQVVGEIEIIRPFLHFQKKDFPSIFHFEDTSNQENHYFRNRIRNSYLPELEKENPRFRDAILGIGNEILDYDLAIAELSNNINVEDLQQLFSYSESTQRVLLQTYLNRFPDLNLTKAQFAEVQQILKSKSQYRHPIKNGYELIKEYQQFQICKISPQADEEEDEFVLHYQNQVAYQGYLFSFGLPLEGESIQQIPVSRETSIHIRHRKTGDVLIQNGHRKKLRRLFIDLKIPMEKRNSALIIEQFGEIVSILGIATNNLSKKTKNDIMNTVLYIEKIDR</sequence>
<comment type="function">
    <text evidence="1">Ligates lysine onto the cytidine present at position 34 of the AUA codon-specific tRNA(Ile) that contains the anticodon CAU, in an ATP-dependent manner. Cytidine is converted to lysidine, thus changing the amino acid specificity of the tRNA from methionine to isoleucine.</text>
</comment>
<comment type="catalytic activity">
    <reaction evidence="1">
        <text>cytidine(34) in tRNA(Ile2) + L-lysine + ATP = lysidine(34) in tRNA(Ile2) + AMP + diphosphate + H(+)</text>
        <dbReference type="Rhea" id="RHEA:43744"/>
        <dbReference type="Rhea" id="RHEA-COMP:10625"/>
        <dbReference type="Rhea" id="RHEA-COMP:10670"/>
        <dbReference type="ChEBI" id="CHEBI:15378"/>
        <dbReference type="ChEBI" id="CHEBI:30616"/>
        <dbReference type="ChEBI" id="CHEBI:32551"/>
        <dbReference type="ChEBI" id="CHEBI:33019"/>
        <dbReference type="ChEBI" id="CHEBI:82748"/>
        <dbReference type="ChEBI" id="CHEBI:83665"/>
        <dbReference type="ChEBI" id="CHEBI:456215"/>
        <dbReference type="EC" id="6.3.4.19"/>
    </reaction>
</comment>
<comment type="subcellular location">
    <subcellularLocation>
        <location evidence="1">Cytoplasm</location>
    </subcellularLocation>
</comment>
<comment type="domain">
    <text>The N-terminal region contains the highly conserved SGGXDS motif, predicted to be a P-loop motif involved in ATP binding.</text>
</comment>
<comment type="similarity">
    <text evidence="1">Belongs to the tRNA(Ile)-lysidine synthase family.</text>
</comment>
<keyword id="KW-0067">ATP-binding</keyword>
<keyword id="KW-0963">Cytoplasm</keyword>
<keyword id="KW-0436">Ligase</keyword>
<keyword id="KW-0547">Nucleotide-binding</keyword>
<keyword id="KW-0819">tRNA processing</keyword>
<dbReference type="EC" id="6.3.4.19" evidence="1"/>
<dbReference type="EMBL" id="CP000936">
    <property type="protein sequence ID" value="ACA37443.1"/>
    <property type="molecule type" value="Genomic_DNA"/>
</dbReference>
<dbReference type="RefSeq" id="WP_001208981.1">
    <property type="nucleotide sequence ID" value="NC_010380.1"/>
</dbReference>
<dbReference type="SMR" id="B1I6Y3"/>
<dbReference type="KEGG" id="spv:SPH_0011"/>
<dbReference type="HOGENOM" id="CLU_018869_0_2_9"/>
<dbReference type="Proteomes" id="UP000002163">
    <property type="component" value="Chromosome"/>
</dbReference>
<dbReference type="GO" id="GO:0005737">
    <property type="term" value="C:cytoplasm"/>
    <property type="evidence" value="ECO:0007669"/>
    <property type="project" value="UniProtKB-SubCell"/>
</dbReference>
<dbReference type="GO" id="GO:0005524">
    <property type="term" value="F:ATP binding"/>
    <property type="evidence" value="ECO:0007669"/>
    <property type="project" value="UniProtKB-UniRule"/>
</dbReference>
<dbReference type="GO" id="GO:0032267">
    <property type="term" value="F:tRNA(Ile)-lysidine synthase activity"/>
    <property type="evidence" value="ECO:0007669"/>
    <property type="project" value="UniProtKB-EC"/>
</dbReference>
<dbReference type="GO" id="GO:0006400">
    <property type="term" value="P:tRNA modification"/>
    <property type="evidence" value="ECO:0007669"/>
    <property type="project" value="UniProtKB-UniRule"/>
</dbReference>
<dbReference type="CDD" id="cd01992">
    <property type="entry name" value="TilS_N"/>
    <property type="match status" value="1"/>
</dbReference>
<dbReference type="Gene3D" id="3.40.50.620">
    <property type="entry name" value="HUPs"/>
    <property type="match status" value="1"/>
</dbReference>
<dbReference type="HAMAP" id="MF_01161">
    <property type="entry name" value="tRNA_Ile_lys_synt"/>
    <property type="match status" value="1"/>
</dbReference>
<dbReference type="InterPro" id="IPR012796">
    <property type="entry name" value="Lysidine-tRNA-synth_C"/>
</dbReference>
<dbReference type="InterPro" id="IPR014729">
    <property type="entry name" value="Rossmann-like_a/b/a_fold"/>
</dbReference>
<dbReference type="InterPro" id="IPR011063">
    <property type="entry name" value="TilS/TtcA_N"/>
</dbReference>
<dbReference type="InterPro" id="IPR012094">
    <property type="entry name" value="tRNA_Ile_lys_synt"/>
</dbReference>
<dbReference type="InterPro" id="IPR012795">
    <property type="entry name" value="tRNA_Ile_lys_synt_N"/>
</dbReference>
<dbReference type="NCBIfam" id="TIGR02433">
    <property type="entry name" value="lysidine_TilS_C"/>
    <property type="match status" value="1"/>
</dbReference>
<dbReference type="NCBIfam" id="TIGR02432">
    <property type="entry name" value="lysidine_TilS_N"/>
    <property type="match status" value="1"/>
</dbReference>
<dbReference type="PANTHER" id="PTHR43033">
    <property type="entry name" value="TRNA(ILE)-LYSIDINE SYNTHASE-RELATED"/>
    <property type="match status" value="1"/>
</dbReference>
<dbReference type="PANTHER" id="PTHR43033:SF1">
    <property type="entry name" value="TRNA(ILE)-LYSIDINE SYNTHASE-RELATED"/>
    <property type="match status" value="1"/>
</dbReference>
<dbReference type="Pfam" id="PF01171">
    <property type="entry name" value="ATP_bind_3"/>
    <property type="match status" value="1"/>
</dbReference>
<dbReference type="Pfam" id="PF11734">
    <property type="entry name" value="TilS_C"/>
    <property type="match status" value="1"/>
</dbReference>
<dbReference type="SMART" id="SM00977">
    <property type="entry name" value="TilS_C"/>
    <property type="match status" value="1"/>
</dbReference>
<dbReference type="SUPFAM" id="SSF52402">
    <property type="entry name" value="Adenine nucleotide alpha hydrolases-like"/>
    <property type="match status" value="1"/>
</dbReference>
<dbReference type="SUPFAM" id="SSF56037">
    <property type="entry name" value="PheT/TilS domain"/>
    <property type="match status" value="1"/>
</dbReference>
<protein>
    <recommendedName>
        <fullName evidence="1">tRNA(Ile)-lysidine synthase</fullName>
        <ecNumber evidence="1">6.3.4.19</ecNumber>
    </recommendedName>
    <alternativeName>
        <fullName evidence="1">tRNA(Ile)-2-lysyl-cytidine synthase</fullName>
    </alternativeName>
    <alternativeName>
        <fullName evidence="1">tRNA(Ile)-lysidine synthetase</fullName>
    </alternativeName>
</protein>
<organism>
    <name type="scientific">Streptococcus pneumoniae (strain Hungary19A-6)</name>
    <dbReference type="NCBI Taxonomy" id="487214"/>
    <lineage>
        <taxon>Bacteria</taxon>
        <taxon>Bacillati</taxon>
        <taxon>Bacillota</taxon>
        <taxon>Bacilli</taxon>
        <taxon>Lactobacillales</taxon>
        <taxon>Streptococcaceae</taxon>
        <taxon>Streptococcus</taxon>
    </lineage>
</organism>
<accession>B1I6Y3</accession>
<feature type="chain" id="PRO_1000137880" description="tRNA(Ile)-lysidine synthase">
    <location>
        <begin position="1"/>
        <end position="425"/>
    </location>
</feature>
<feature type="binding site" evidence="1">
    <location>
        <begin position="27"/>
        <end position="32"/>
    </location>
    <ligand>
        <name>ATP</name>
        <dbReference type="ChEBI" id="CHEBI:30616"/>
    </ligand>
</feature>
<evidence type="ECO:0000255" key="1">
    <source>
        <dbReference type="HAMAP-Rule" id="MF_01161"/>
    </source>
</evidence>